<accession>Q92020</accession>
<accession>Q1X7U4</accession>
<name>MYF6_XENLA</name>
<reference key="1">
    <citation type="journal article" date="1992" name="Dev. Biol.">
        <title>Expression of the myogenic gene MRF4 during Xenopus development.</title>
        <authorList>
            <person name="Jennings C.G.B."/>
        </authorList>
    </citation>
    <scope>NUCLEOTIDE SEQUENCE [MRNA]</scope>
    <scope>TISSUE SPECIFICITY</scope>
</reference>
<reference key="2">
    <citation type="journal article" date="1992" name="Dev. Biol.">
        <authorList>
            <person name="Jennings C.G.B."/>
        </authorList>
    </citation>
    <scope>ERRATUM OF PUBMED:1374354</scope>
</reference>
<reference key="3">
    <citation type="journal article" date="2006" name="Dev. Dyn.">
        <title>Spatio-temporal expression of MRF4 transcripts and protein during Xenopus laevis embryogenesis.</title>
        <authorList>
            <person name="Della Gaspera B."/>
            <person name="Sequeira I."/>
            <person name="Charbonnier F."/>
            <person name="Becker C."/>
            <person name="Shi D.L."/>
            <person name="Chanoine C."/>
        </authorList>
    </citation>
    <scope>NUCLEOTIDE SEQUENCE [MRNA]</scope>
</reference>
<protein>
    <recommendedName>
        <fullName>Myogenic factor 6</fullName>
        <shortName>Myf-6</shortName>
    </recommendedName>
    <alternativeName>
        <fullName>Muscle-specific regulatory factor 4</fullName>
    </alternativeName>
</protein>
<keyword id="KW-0217">Developmental protein</keyword>
<keyword id="KW-0221">Differentiation</keyword>
<keyword id="KW-0238">DNA-binding</keyword>
<keyword id="KW-0517">Myogenesis</keyword>
<keyword id="KW-0539">Nucleus</keyword>
<keyword id="KW-1185">Reference proteome</keyword>
<evidence type="ECO:0000250" key="1"/>
<evidence type="ECO:0000255" key="2">
    <source>
        <dbReference type="PROSITE-ProRule" id="PRU00981"/>
    </source>
</evidence>
<evidence type="ECO:0000269" key="3">
    <source>
    </source>
</evidence>
<gene>
    <name type="primary">myf6</name>
    <name type="synonym">mrf4</name>
</gene>
<organism>
    <name type="scientific">Xenopus laevis</name>
    <name type="common">African clawed frog</name>
    <dbReference type="NCBI Taxonomy" id="8355"/>
    <lineage>
        <taxon>Eukaryota</taxon>
        <taxon>Metazoa</taxon>
        <taxon>Chordata</taxon>
        <taxon>Craniata</taxon>
        <taxon>Vertebrata</taxon>
        <taxon>Euteleostomi</taxon>
        <taxon>Amphibia</taxon>
        <taxon>Batrachia</taxon>
        <taxon>Anura</taxon>
        <taxon>Pipoidea</taxon>
        <taxon>Pipidae</taxon>
        <taxon>Xenopodinae</taxon>
        <taxon>Xenopus</taxon>
        <taxon>Xenopus</taxon>
    </lineage>
</organism>
<dbReference type="EMBL" id="S84990">
    <property type="protein sequence ID" value="AAB21581.1"/>
    <property type="molecule type" value="mRNA"/>
</dbReference>
<dbReference type="EMBL" id="S34392">
    <property type="protein sequence ID" value="AAB22140.1"/>
    <property type="molecule type" value="mRNA"/>
</dbReference>
<dbReference type="EMBL" id="AY970827">
    <property type="protein sequence ID" value="AAY40356.1"/>
    <property type="molecule type" value="mRNA"/>
</dbReference>
<dbReference type="PIR" id="B44886">
    <property type="entry name" value="B43909"/>
</dbReference>
<dbReference type="RefSeq" id="NP_001081477.1">
    <property type="nucleotide sequence ID" value="NM_001088008.1"/>
</dbReference>
<dbReference type="SMR" id="Q92020"/>
<dbReference type="GeneID" id="397858"/>
<dbReference type="KEGG" id="xla:397858"/>
<dbReference type="AGR" id="Xenbase:XB-GENE-6252334"/>
<dbReference type="CTD" id="397858"/>
<dbReference type="Xenbase" id="XB-GENE-6252334">
    <property type="gene designation" value="myf6.L"/>
</dbReference>
<dbReference type="OrthoDB" id="10049614at2759"/>
<dbReference type="Proteomes" id="UP000186698">
    <property type="component" value="Chromosome 3L"/>
</dbReference>
<dbReference type="Bgee" id="397858">
    <property type="expression patterns" value="Expressed in muscle tissue and 1 other cell type or tissue"/>
</dbReference>
<dbReference type="GO" id="GO:0005634">
    <property type="term" value="C:nucleus"/>
    <property type="evidence" value="ECO:0007669"/>
    <property type="project" value="UniProtKB-SubCell"/>
</dbReference>
<dbReference type="GO" id="GO:0000981">
    <property type="term" value="F:DNA-binding transcription factor activity, RNA polymerase II-specific"/>
    <property type="evidence" value="ECO:0000318"/>
    <property type="project" value="GO_Central"/>
</dbReference>
<dbReference type="GO" id="GO:0046983">
    <property type="term" value="F:protein dimerization activity"/>
    <property type="evidence" value="ECO:0007669"/>
    <property type="project" value="InterPro"/>
</dbReference>
<dbReference type="GO" id="GO:0000978">
    <property type="term" value="F:RNA polymerase II cis-regulatory region sequence-specific DNA binding"/>
    <property type="evidence" value="ECO:0000318"/>
    <property type="project" value="GO_Central"/>
</dbReference>
<dbReference type="GO" id="GO:0045663">
    <property type="term" value="P:positive regulation of myoblast differentiation"/>
    <property type="evidence" value="ECO:0000318"/>
    <property type="project" value="GO_Central"/>
</dbReference>
<dbReference type="GO" id="GO:0048743">
    <property type="term" value="P:positive regulation of skeletal muscle fiber development"/>
    <property type="evidence" value="ECO:0000318"/>
    <property type="project" value="GO_Central"/>
</dbReference>
<dbReference type="GO" id="GO:0006357">
    <property type="term" value="P:regulation of transcription by RNA polymerase II"/>
    <property type="evidence" value="ECO:0000318"/>
    <property type="project" value="GO_Central"/>
</dbReference>
<dbReference type="GO" id="GO:0035914">
    <property type="term" value="P:skeletal muscle cell differentiation"/>
    <property type="evidence" value="ECO:0000318"/>
    <property type="project" value="GO_Central"/>
</dbReference>
<dbReference type="CDD" id="cd18934">
    <property type="entry name" value="bHLH_TS_MRF4_Myf6"/>
    <property type="match status" value="1"/>
</dbReference>
<dbReference type="FunFam" id="4.10.280.10:FF:000005">
    <property type="entry name" value="Myogenic factor"/>
    <property type="match status" value="1"/>
</dbReference>
<dbReference type="Gene3D" id="4.10.280.10">
    <property type="entry name" value="Helix-loop-helix DNA-binding domain"/>
    <property type="match status" value="1"/>
</dbReference>
<dbReference type="InterPro" id="IPR011598">
    <property type="entry name" value="bHLH_dom"/>
</dbReference>
<dbReference type="InterPro" id="IPR036638">
    <property type="entry name" value="HLH_DNA-bd_sf"/>
</dbReference>
<dbReference type="InterPro" id="IPR002546">
    <property type="entry name" value="MyoD_N"/>
</dbReference>
<dbReference type="InterPro" id="IPR039704">
    <property type="entry name" value="Myogenic_factor"/>
</dbReference>
<dbReference type="PANTHER" id="PTHR11534">
    <property type="entry name" value="MYOGENIC FACTOR"/>
    <property type="match status" value="1"/>
</dbReference>
<dbReference type="PANTHER" id="PTHR11534:SF4">
    <property type="entry name" value="MYOGENIC FACTOR 6"/>
    <property type="match status" value="1"/>
</dbReference>
<dbReference type="Pfam" id="PF01586">
    <property type="entry name" value="Basic"/>
    <property type="match status" value="1"/>
</dbReference>
<dbReference type="Pfam" id="PF00010">
    <property type="entry name" value="HLH"/>
    <property type="match status" value="1"/>
</dbReference>
<dbReference type="SMART" id="SM00520">
    <property type="entry name" value="BASIC"/>
    <property type="match status" value="1"/>
</dbReference>
<dbReference type="SMART" id="SM00353">
    <property type="entry name" value="HLH"/>
    <property type="match status" value="1"/>
</dbReference>
<dbReference type="SUPFAM" id="SSF47459">
    <property type="entry name" value="HLH, helix-loop-helix DNA-binding domain"/>
    <property type="match status" value="1"/>
</dbReference>
<dbReference type="PROSITE" id="PS50888">
    <property type="entry name" value="BHLH"/>
    <property type="match status" value="1"/>
</dbReference>
<sequence length="240" mass="27127">MMDLFETNSYFFYLDGDNGAFQQLGVADGSPVYPGSEGTLSPCRDQLPVDAGSDRSEEEHVLAPPGLQPHCPGQCLIWACKTCKRKSAPTDRRKAATLRERRRLKKINEAFEALKRRTVANPNQRLPKVEILRSAINYIERLQDLLHSLDQQDKPQKADEEPFSYNSKEAPVQSEDFLSTCHPEWHHIPDHSRMPNLNIKEEGSLQENSSSSLQCLSSIVDSISSDEPRHPCTIQELVEN</sequence>
<feature type="chain" id="PRO_0000127359" description="Myogenic factor 6">
    <location>
        <begin position="1"/>
        <end position="240"/>
    </location>
</feature>
<feature type="domain" description="bHLH" evidence="2">
    <location>
        <begin position="91"/>
        <end position="142"/>
    </location>
</feature>
<proteinExistence type="evidence at transcript level"/>
<comment type="function">
    <text evidence="1">Involved in muscle differentiation (myogenic factor). Induces fibroblasts to differentiate into myoblasts. Probable sequence specific DNA-binding protein (By similarity).</text>
</comment>
<comment type="subunit">
    <text>Efficient DNA binding requires dimerization with another bHLH protein.</text>
</comment>
<comment type="subcellular location">
    <subcellularLocation>
        <location evidence="2">Nucleus</location>
    </subcellularLocation>
</comment>
<comment type="tissue specificity">
    <text evidence="3">Skeletal muscle.</text>
</comment>